<proteinExistence type="inferred from homology"/>
<keyword id="KW-0997">Cell inner membrane</keyword>
<keyword id="KW-1003">Cell membrane</keyword>
<keyword id="KW-0472">Membrane</keyword>
<keyword id="KW-0520">NAD</keyword>
<keyword id="KW-0874">Quinone</keyword>
<keyword id="KW-1278">Translocase</keyword>
<keyword id="KW-0812">Transmembrane</keyword>
<keyword id="KW-1133">Transmembrane helix</keyword>
<keyword id="KW-0813">Transport</keyword>
<keyword id="KW-0830">Ubiquinone</keyword>
<accession>A3NTB6</accession>
<feature type="chain" id="PRO_0000389996" description="NADH-quinone oxidoreductase subunit K">
    <location>
        <begin position="1"/>
        <end position="101"/>
    </location>
</feature>
<feature type="transmembrane region" description="Helical" evidence="1">
    <location>
        <begin position="4"/>
        <end position="24"/>
    </location>
</feature>
<feature type="transmembrane region" description="Helical" evidence="1">
    <location>
        <begin position="29"/>
        <end position="49"/>
    </location>
</feature>
<feature type="transmembrane region" description="Helical" evidence="1">
    <location>
        <begin position="61"/>
        <end position="81"/>
    </location>
</feature>
<reference key="1">
    <citation type="journal article" date="2010" name="Genome Biol. Evol.">
        <title>Continuing evolution of Burkholderia mallei through genome reduction and large-scale rearrangements.</title>
        <authorList>
            <person name="Losada L."/>
            <person name="Ronning C.M."/>
            <person name="DeShazer D."/>
            <person name="Woods D."/>
            <person name="Fedorova N."/>
            <person name="Kim H.S."/>
            <person name="Shabalina S.A."/>
            <person name="Pearson T.R."/>
            <person name="Brinkac L."/>
            <person name="Tan P."/>
            <person name="Nandi T."/>
            <person name="Crabtree J."/>
            <person name="Badger J."/>
            <person name="Beckstrom-Sternberg S."/>
            <person name="Saqib M."/>
            <person name="Schutzer S.E."/>
            <person name="Keim P."/>
            <person name="Nierman W.C."/>
        </authorList>
    </citation>
    <scope>NUCLEOTIDE SEQUENCE [LARGE SCALE GENOMIC DNA]</scope>
    <source>
        <strain>1106a</strain>
    </source>
</reference>
<comment type="function">
    <text evidence="1">NDH-1 shuttles electrons from NADH, via FMN and iron-sulfur (Fe-S) centers, to quinones in the respiratory chain. The immediate electron acceptor for the enzyme in this species is believed to be ubiquinone. Couples the redox reaction to proton translocation (for every two electrons transferred, four hydrogen ions are translocated across the cytoplasmic membrane), and thus conserves the redox energy in a proton gradient.</text>
</comment>
<comment type="catalytic activity">
    <reaction evidence="1">
        <text>a quinone + NADH + 5 H(+)(in) = a quinol + NAD(+) + 4 H(+)(out)</text>
        <dbReference type="Rhea" id="RHEA:57888"/>
        <dbReference type="ChEBI" id="CHEBI:15378"/>
        <dbReference type="ChEBI" id="CHEBI:24646"/>
        <dbReference type="ChEBI" id="CHEBI:57540"/>
        <dbReference type="ChEBI" id="CHEBI:57945"/>
        <dbReference type="ChEBI" id="CHEBI:132124"/>
    </reaction>
</comment>
<comment type="subunit">
    <text evidence="1">NDH-1 is composed of 14 different subunits. Subunits NuoA, H, J, K, L, M, N constitute the membrane sector of the complex.</text>
</comment>
<comment type="subcellular location">
    <subcellularLocation>
        <location evidence="1">Cell inner membrane</location>
        <topology evidence="1">Multi-pass membrane protein</topology>
    </subcellularLocation>
</comment>
<comment type="similarity">
    <text evidence="1">Belongs to the complex I subunit 4L family.</text>
</comment>
<dbReference type="EC" id="7.1.1.-" evidence="1"/>
<dbReference type="EMBL" id="CP000572">
    <property type="protein sequence ID" value="ABN89618.1"/>
    <property type="molecule type" value="Genomic_DNA"/>
</dbReference>
<dbReference type="RefSeq" id="WP_004185739.1">
    <property type="nucleotide sequence ID" value="NC_009076.1"/>
</dbReference>
<dbReference type="SMR" id="A3NTB6"/>
<dbReference type="GeneID" id="98107315"/>
<dbReference type="KEGG" id="bpl:BURPS1106A_1309"/>
<dbReference type="HOGENOM" id="CLU_144724_2_0_4"/>
<dbReference type="Proteomes" id="UP000006738">
    <property type="component" value="Chromosome I"/>
</dbReference>
<dbReference type="GO" id="GO:0030964">
    <property type="term" value="C:NADH dehydrogenase complex"/>
    <property type="evidence" value="ECO:0007669"/>
    <property type="project" value="TreeGrafter"/>
</dbReference>
<dbReference type="GO" id="GO:0005886">
    <property type="term" value="C:plasma membrane"/>
    <property type="evidence" value="ECO:0007669"/>
    <property type="project" value="UniProtKB-SubCell"/>
</dbReference>
<dbReference type="GO" id="GO:0050136">
    <property type="term" value="F:NADH:ubiquinone reductase (non-electrogenic) activity"/>
    <property type="evidence" value="ECO:0007669"/>
    <property type="project" value="UniProtKB-UniRule"/>
</dbReference>
<dbReference type="GO" id="GO:0048038">
    <property type="term" value="F:quinone binding"/>
    <property type="evidence" value="ECO:0007669"/>
    <property type="project" value="UniProtKB-KW"/>
</dbReference>
<dbReference type="GO" id="GO:0042773">
    <property type="term" value="P:ATP synthesis coupled electron transport"/>
    <property type="evidence" value="ECO:0007669"/>
    <property type="project" value="InterPro"/>
</dbReference>
<dbReference type="FunFam" id="1.10.287.3510:FF:000001">
    <property type="entry name" value="NADH-quinone oxidoreductase subunit K"/>
    <property type="match status" value="1"/>
</dbReference>
<dbReference type="Gene3D" id="1.10.287.3510">
    <property type="match status" value="1"/>
</dbReference>
<dbReference type="HAMAP" id="MF_01456">
    <property type="entry name" value="NDH1_NuoK"/>
    <property type="match status" value="1"/>
</dbReference>
<dbReference type="InterPro" id="IPR001133">
    <property type="entry name" value="NADH_UbQ_OxRdtase_chain4L/K"/>
</dbReference>
<dbReference type="InterPro" id="IPR039428">
    <property type="entry name" value="NUOK/Mnh_C1-like"/>
</dbReference>
<dbReference type="NCBIfam" id="NF004320">
    <property type="entry name" value="PRK05715.1-2"/>
    <property type="match status" value="1"/>
</dbReference>
<dbReference type="NCBIfam" id="NF004321">
    <property type="entry name" value="PRK05715.1-3"/>
    <property type="match status" value="1"/>
</dbReference>
<dbReference type="NCBIfam" id="NF004323">
    <property type="entry name" value="PRK05715.1-5"/>
    <property type="match status" value="1"/>
</dbReference>
<dbReference type="PANTHER" id="PTHR11434:SF21">
    <property type="entry name" value="NADH DEHYDROGENASE SUBUNIT 4L-RELATED"/>
    <property type="match status" value="1"/>
</dbReference>
<dbReference type="PANTHER" id="PTHR11434">
    <property type="entry name" value="NADH-UBIQUINONE OXIDOREDUCTASE SUBUNIT ND4L"/>
    <property type="match status" value="1"/>
</dbReference>
<dbReference type="Pfam" id="PF00420">
    <property type="entry name" value="Oxidored_q2"/>
    <property type="match status" value="1"/>
</dbReference>
<evidence type="ECO:0000255" key="1">
    <source>
        <dbReference type="HAMAP-Rule" id="MF_01456"/>
    </source>
</evidence>
<name>NUOK_BURP0</name>
<gene>
    <name evidence="1" type="primary">nuoK</name>
    <name type="ordered locus">BURPS1106A_1309</name>
</gene>
<protein>
    <recommendedName>
        <fullName evidence="1">NADH-quinone oxidoreductase subunit K</fullName>
        <ecNumber evidence="1">7.1.1.-</ecNumber>
    </recommendedName>
    <alternativeName>
        <fullName evidence="1">NADH dehydrogenase I subunit K</fullName>
    </alternativeName>
    <alternativeName>
        <fullName evidence="1">NDH-1 subunit K</fullName>
    </alternativeName>
</protein>
<organism>
    <name type="scientific">Burkholderia pseudomallei (strain 1106a)</name>
    <dbReference type="NCBI Taxonomy" id="357348"/>
    <lineage>
        <taxon>Bacteria</taxon>
        <taxon>Pseudomonadati</taxon>
        <taxon>Pseudomonadota</taxon>
        <taxon>Betaproteobacteria</taxon>
        <taxon>Burkholderiales</taxon>
        <taxon>Burkholderiaceae</taxon>
        <taxon>Burkholderia</taxon>
        <taxon>pseudomallei group</taxon>
    </lineage>
</organism>
<sequence>MLTLAHYLVLGAILFAIAIVGIFLNRRNIIIILMAIELMLLAVNTNFVAFSHYLGDVHGQIFVFFVLTVAAAEAAIGLAILVTLFRKLDTINVEDLDQLKG</sequence>